<gene>
    <name type="primary">dapAL</name>
    <name type="ordered locus">PAE2915</name>
</gene>
<name>DAPAL_PYRAE</name>
<comment type="subunit">
    <text evidence="1">Homotetramer.</text>
</comment>
<comment type="subcellular location">
    <subcellularLocation>
        <location evidence="2">Cytoplasm</location>
    </subcellularLocation>
</comment>
<comment type="similarity">
    <text evidence="2">Belongs to the DapA family.</text>
</comment>
<proteinExistence type="inferred from homology"/>
<dbReference type="EC" id="4.-.-.-"/>
<dbReference type="EMBL" id="AE009441">
    <property type="protein sequence ID" value="AAL64533.1"/>
    <property type="molecule type" value="Genomic_DNA"/>
</dbReference>
<dbReference type="RefSeq" id="WP_011009001.1">
    <property type="nucleotide sequence ID" value="NC_003364.1"/>
</dbReference>
<dbReference type="SMR" id="Q8ZU75"/>
<dbReference type="FunCoup" id="Q8ZU75">
    <property type="interactions" value="115"/>
</dbReference>
<dbReference type="STRING" id="178306.PAE2915"/>
<dbReference type="EnsemblBacteria" id="AAL64533">
    <property type="protein sequence ID" value="AAL64533"/>
    <property type="gene ID" value="PAE2915"/>
</dbReference>
<dbReference type="GeneID" id="1463695"/>
<dbReference type="KEGG" id="pai:PAE2915"/>
<dbReference type="PATRIC" id="fig|178306.9.peg.2180"/>
<dbReference type="eggNOG" id="arCOG04172">
    <property type="taxonomic scope" value="Archaea"/>
</dbReference>
<dbReference type="HOGENOM" id="CLU_049343_5_1_2"/>
<dbReference type="InParanoid" id="Q8ZU75"/>
<dbReference type="Proteomes" id="UP000002439">
    <property type="component" value="Chromosome"/>
</dbReference>
<dbReference type="GO" id="GO:0005737">
    <property type="term" value="C:cytoplasm"/>
    <property type="evidence" value="ECO:0007669"/>
    <property type="project" value="UniProtKB-SubCell"/>
</dbReference>
<dbReference type="GO" id="GO:0008675">
    <property type="term" value="F:2-dehydro-3-deoxy-phosphogluconate aldolase activity"/>
    <property type="evidence" value="ECO:0007669"/>
    <property type="project" value="UniProtKB-ARBA"/>
</dbReference>
<dbReference type="GO" id="GO:0008840">
    <property type="term" value="F:4-hydroxy-tetrahydrodipicolinate synthase activity"/>
    <property type="evidence" value="ECO:0000318"/>
    <property type="project" value="GO_Central"/>
</dbReference>
<dbReference type="CDD" id="cd00408">
    <property type="entry name" value="DHDPS-like"/>
    <property type="match status" value="1"/>
</dbReference>
<dbReference type="Gene3D" id="3.20.20.70">
    <property type="entry name" value="Aldolase class I"/>
    <property type="match status" value="1"/>
</dbReference>
<dbReference type="InterPro" id="IPR013785">
    <property type="entry name" value="Aldolase_TIM"/>
</dbReference>
<dbReference type="InterPro" id="IPR002220">
    <property type="entry name" value="DapA-like"/>
</dbReference>
<dbReference type="PANTHER" id="PTHR12128:SF66">
    <property type="entry name" value="4-HYDROXY-2-OXOGLUTARATE ALDOLASE, MITOCHONDRIAL"/>
    <property type="match status" value="1"/>
</dbReference>
<dbReference type="PANTHER" id="PTHR12128">
    <property type="entry name" value="DIHYDRODIPICOLINATE SYNTHASE"/>
    <property type="match status" value="1"/>
</dbReference>
<dbReference type="Pfam" id="PF00701">
    <property type="entry name" value="DHDPS"/>
    <property type="match status" value="1"/>
</dbReference>
<dbReference type="PIRSF" id="PIRSF001365">
    <property type="entry name" value="DHDPS"/>
    <property type="match status" value="1"/>
</dbReference>
<dbReference type="PRINTS" id="PR00146">
    <property type="entry name" value="DHPICSNTHASE"/>
</dbReference>
<dbReference type="SMART" id="SM01130">
    <property type="entry name" value="DHDPS"/>
    <property type="match status" value="1"/>
</dbReference>
<dbReference type="SUPFAM" id="SSF51569">
    <property type="entry name" value="Aldolase"/>
    <property type="match status" value="1"/>
</dbReference>
<evidence type="ECO:0000250" key="1"/>
<evidence type="ECO:0000305" key="2"/>
<organism>
    <name type="scientific">Pyrobaculum aerophilum (strain ATCC 51768 / DSM 7523 / JCM 9630 / CIP 104966 / NBRC 100827 / IM2)</name>
    <dbReference type="NCBI Taxonomy" id="178306"/>
    <lineage>
        <taxon>Archaea</taxon>
        <taxon>Thermoproteota</taxon>
        <taxon>Thermoprotei</taxon>
        <taxon>Thermoproteales</taxon>
        <taxon>Thermoproteaceae</taxon>
        <taxon>Pyrobaculum</taxon>
    </lineage>
</organism>
<reference key="1">
    <citation type="journal article" date="2002" name="Proc. Natl. Acad. Sci. U.S.A.">
        <title>Genome sequence of the hyperthermophilic crenarchaeon Pyrobaculum aerophilum.</title>
        <authorList>
            <person name="Fitz-Gibbon S.T."/>
            <person name="Ladner H."/>
            <person name="Kim U.-J."/>
            <person name="Stetter K.O."/>
            <person name="Simon M.I."/>
            <person name="Miller J.H."/>
        </authorList>
    </citation>
    <scope>NUCLEOTIDE SEQUENCE [LARGE SCALE GENOMIC DNA]</scope>
    <source>
        <strain>ATCC 51768 / DSM 7523 / JCM 9630 / CIP 104966 / NBRC 100827 / IM2</strain>
    </source>
</reference>
<feature type="chain" id="PRO_0000103202" description="Uncharacterized DapA-like lyase PAE2915">
    <location>
        <begin position="1"/>
        <end position="301"/>
    </location>
</feature>
<feature type="active site" description="Charge relay system" evidence="1">
    <location>
        <position position="44"/>
    </location>
</feature>
<feature type="active site" description="Charge relay system" evidence="1">
    <location>
        <position position="107"/>
    </location>
</feature>
<feature type="active site" description="Proton donor" evidence="1">
    <location>
        <position position="133"/>
    </location>
</feature>
<feature type="active site" description="Schiff-base intermediate with substrate" evidence="1">
    <location>
        <position position="162"/>
    </location>
</feature>
<sequence>MKLEGVIVATVMPFAKDGVNYEGLRLLLSKIVEAGYHGVFPTSSTGEVTKLSAEERVRVMQLAKEVAGGKALVVAGTGTGDHVSTIDIARKYKDVGVDAILITPPYYIQYDWAALYAFYKKVLDKVDIPVILYTIPLATGYNVPVEVFEMVAGEYSQVVGVKDSSGDFRYHLDLIHLLGKRLSVLQGLDMLFVPSLVMGAHGGILAGPNFLGRITLEQYLLVKEGKIAEAVALHNKLMPLWRFMGGCGLVGKLGGKWPTLYKLATQLVHGIDMGPPREPLPPVDDKDRRELEKILKELGLI</sequence>
<accession>Q8ZU75</accession>
<keyword id="KW-0963">Cytoplasm</keyword>
<keyword id="KW-0456">Lyase</keyword>
<keyword id="KW-1185">Reference proteome</keyword>
<keyword id="KW-0704">Schiff base</keyword>
<protein>
    <recommendedName>
        <fullName>Uncharacterized DapA-like lyase PAE2915</fullName>
        <ecNumber>4.-.-.-</ecNumber>
    </recommendedName>
</protein>